<proteinExistence type="evidence at protein level"/>
<feature type="chain" id="PRO_0000175303" description="DNA-directed RNA polymerase subunit alpha">
    <location>
        <begin position="1"/>
        <end position="347"/>
    </location>
</feature>
<feature type="region of interest" description="Alpha N-terminal domain (alpha-NTD)" evidence="1">
    <location>
        <begin position="1"/>
        <end position="243"/>
    </location>
</feature>
<feature type="region of interest" description="Alpha C-terminal domain (alpha-CTD)" evidence="1">
    <location>
        <begin position="260"/>
        <end position="347"/>
    </location>
</feature>
<accession>Q72CF4</accession>
<keyword id="KW-0240">DNA-directed RNA polymerase</keyword>
<keyword id="KW-0548">Nucleotidyltransferase</keyword>
<keyword id="KW-1185">Reference proteome</keyword>
<keyword id="KW-0804">Transcription</keyword>
<keyword id="KW-0808">Transferase</keyword>
<organism>
    <name type="scientific">Nitratidesulfovibrio vulgaris (strain ATCC 29579 / DSM 644 / CCUG 34227 / NCIMB 8303 / VKM B-1760 / Hildenborough)</name>
    <name type="common">Desulfovibrio vulgaris</name>
    <dbReference type="NCBI Taxonomy" id="882"/>
    <lineage>
        <taxon>Bacteria</taxon>
        <taxon>Pseudomonadati</taxon>
        <taxon>Thermodesulfobacteriota</taxon>
        <taxon>Desulfovibrionia</taxon>
        <taxon>Desulfovibrionales</taxon>
        <taxon>Desulfovibrionaceae</taxon>
        <taxon>Nitratidesulfovibrio</taxon>
    </lineage>
</organism>
<protein>
    <recommendedName>
        <fullName evidence="1">DNA-directed RNA polymerase subunit alpha</fullName>
        <shortName evidence="1">RNAP subunit alpha</shortName>
        <ecNumber evidence="1">2.7.7.6</ecNumber>
    </recommendedName>
    <alternativeName>
        <fullName evidence="1">RNA polymerase subunit alpha</fullName>
    </alternativeName>
    <alternativeName>
        <fullName evidence="1">Transcriptase subunit alpha</fullName>
    </alternativeName>
</protein>
<comment type="function">
    <text evidence="1">DNA-dependent RNA polymerase catalyzes the transcription of DNA into RNA using the four ribonucleoside triphosphates as substrates.</text>
</comment>
<comment type="catalytic activity">
    <reaction evidence="1">
        <text>RNA(n) + a ribonucleoside 5'-triphosphate = RNA(n+1) + diphosphate</text>
        <dbReference type="Rhea" id="RHEA:21248"/>
        <dbReference type="Rhea" id="RHEA-COMP:14527"/>
        <dbReference type="Rhea" id="RHEA-COMP:17342"/>
        <dbReference type="ChEBI" id="CHEBI:33019"/>
        <dbReference type="ChEBI" id="CHEBI:61557"/>
        <dbReference type="ChEBI" id="CHEBI:140395"/>
        <dbReference type="EC" id="2.7.7.6"/>
    </reaction>
</comment>
<comment type="subunit">
    <text evidence="1">Homodimer. The RNAP catalytic core consists of 2 alpha, 1 beta, 1 beta' and 1 omega subunit. When a sigma factor is associated with the core the holoenzyme is formed, which can initiate transcription.</text>
</comment>
<comment type="interaction">
    <interactant intactId="EBI-10066307">
        <id>Q72CF4</id>
    </interactant>
    <interactant intactId="EBI-10066295">
        <id>Q727C7</id>
        <label>rpoB</label>
    </interactant>
    <organismsDiffer>false</organismsDiffer>
    <experiments>3</experiments>
</comment>
<comment type="domain">
    <text evidence="1">The N-terminal domain is essential for RNAP assembly and basal transcription, whereas the C-terminal domain is involved in interaction with transcriptional regulators and with upstream promoter elements.</text>
</comment>
<comment type="similarity">
    <text evidence="1">Belongs to the RNA polymerase alpha chain family.</text>
</comment>
<evidence type="ECO:0000255" key="1">
    <source>
        <dbReference type="HAMAP-Rule" id="MF_00059"/>
    </source>
</evidence>
<reference key="1">
    <citation type="journal article" date="2004" name="Nat. Biotechnol.">
        <title>The genome sequence of the anaerobic, sulfate-reducing bacterium Desulfovibrio vulgaris Hildenborough.</title>
        <authorList>
            <person name="Heidelberg J.F."/>
            <person name="Seshadri R."/>
            <person name="Haveman S.A."/>
            <person name="Hemme C.L."/>
            <person name="Paulsen I.T."/>
            <person name="Kolonay J.F."/>
            <person name="Eisen J.A."/>
            <person name="Ward N.L."/>
            <person name="Methe B.A."/>
            <person name="Brinkac L.M."/>
            <person name="Daugherty S.C."/>
            <person name="DeBoy R.T."/>
            <person name="Dodson R.J."/>
            <person name="Durkin A.S."/>
            <person name="Madupu R."/>
            <person name="Nelson W.C."/>
            <person name="Sullivan S.A."/>
            <person name="Fouts D.E."/>
            <person name="Haft D.H."/>
            <person name="Selengut J."/>
            <person name="Peterson J.D."/>
            <person name="Davidsen T.M."/>
            <person name="Zafar N."/>
            <person name="Zhou L."/>
            <person name="Radune D."/>
            <person name="Dimitrov G."/>
            <person name="Hance M."/>
            <person name="Tran K."/>
            <person name="Khouri H.M."/>
            <person name="Gill J."/>
            <person name="Utterback T.R."/>
            <person name="Feldblyum T.V."/>
            <person name="Wall J.D."/>
            <person name="Voordouw G."/>
            <person name="Fraser C.M."/>
        </authorList>
    </citation>
    <scope>NUCLEOTIDE SEQUENCE [LARGE SCALE GENOMIC DNA]</scope>
    <source>
        <strain>ATCC 29579 / DSM 644 / CCUG 34227 / NCIMB 8303 / VKM B-1760 / Hildenborough</strain>
    </source>
</reference>
<gene>
    <name evidence="1" type="primary">rpoA</name>
    <name type="ordered locus">DVU_1329</name>
</gene>
<name>RPOA_NITV2</name>
<dbReference type="EC" id="2.7.7.6" evidence="1"/>
<dbReference type="EMBL" id="AE017285">
    <property type="protein sequence ID" value="AAS95807.1"/>
    <property type="molecule type" value="Genomic_DNA"/>
</dbReference>
<dbReference type="RefSeq" id="WP_010938624.1">
    <property type="nucleotide sequence ID" value="NC_002937.3"/>
</dbReference>
<dbReference type="RefSeq" id="YP_010548.1">
    <property type="nucleotide sequence ID" value="NC_002937.3"/>
</dbReference>
<dbReference type="SMR" id="Q72CF4"/>
<dbReference type="IntAct" id="Q72CF4">
    <property type="interactions" value="6"/>
</dbReference>
<dbReference type="STRING" id="882.DVU_1329"/>
<dbReference type="PaxDb" id="882-DVU_1329"/>
<dbReference type="EnsemblBacteria" id="AAS95807">
    <property type="protein sequence ID" value="AAS95807"/>
    <property type="gene ID" value="DVU_1329"/>
</dbReference>
<dbReference type="KEGG" id="dvu:DVU_1329"/>
<dbReference type="PATRIC" id="fig|882.5.peg.1241"/>
<dbReference type="eggNOG" id="COG0202">
    <property type="taxonomic scope" value="Bacteria"/>
</dbReference>
<dbReference type="HOGENOM" id="CLU_053084_0_1_7"/>
<dbReference type="OrthoDB" id="9805706at2"/>
<dbReference type="PhylomeDB" id="Q72CF4"/>
<dbReference type="Proteomes" id="UP000002194">
    <property type="component" value="Chromosome"/>
</dbReference>
<dbReference type="GO" id="GO:0005737">
    <property type="term" value="C:cytoplasm"/>
    <property type="evidence" value="ECO:0007669"/>
    <property type="project" value="UniProtKB-ARBA"/>
</dbReference>
<dbReference type="GO" id="GO:0000428">
    <property type="term" value="C:DNA-directed RNA polymerase complex"/>
    <property type="evidence" value="ECO:0007669"/>
    <property type="project" value="UniProtKB-KW"/>
</dbReference>
<dbReference type="GO" id="GO:0003677">
    <property type="term" value="F:DNA binding"/>
    <property type="evidence" value="ECO:0007669"/>
    <property type="project" value="UniProtKB-UniRule"/>
</dbReference>
<dbReference type="GO" id="GO:0003899">
    <property type="term" value="F:DNA-directed RNA polymerase activity"/>
    <property type="evidence" value="ECO:0007669"/>
    <property type="project" value="UniProtKB-UniRule"/>
</dbReference>
<dbReference type="GO" id="GO:0046983">
    <property type="term" value="F:protein dimerization activity"/>
    <property type="evidence" value="ECO:0007669"/>
    <property type="project" value="InterPro"/>
</dbReference>
<dbReference type="GO" id="GO:0006351">
    <property type="term" value="P:DNA-templated transcription"/>
    <property type="evidence" value="ECO:0007669"/>
    <property type="project" value="UniProtKB-UniRule"/>
</dbReference>
<dbReference type="CDD" id="cd06928">
    <property type="entry name" value="RNAP_alpha_NTD"/>
    <property type="match status" value="1"/>
</dbReference>
<dbReference type="FunFam" id="1.10.150.20:FF:000001">
    <property type="entry name" value="DNA-directed RNA polymerase subunit alpha"/>
    <property type="match status" value="1"/>
</dbReference>
<dbReference type="FunFam" id="2.170.120.12:FF:000001">
    <property type="entry name" value="DNA-directed RNA polymerase subunit alpha"/>
    <property type="match status" value="1"/>
</dbReference>
<dbReference type="Gene3D" id="1.10.150.20">
    <property type="entry name" value="5' to 3' exonuclease, C-terminal subdomain"/>
    <property type="match status" value="1"/>
</dbReference>
<dbReference type="Gene3D" id="2.170.120.12">
    <property type="entry name" value="DNA-directed RNA polymerase, insert domain"/>
    <property type="match status" value="1"/>
</dbReference>
<dbReference type="Gene3D" id="3.30.1360.10">
    <property type="entry name" value="RNA polymerase, RBP11-like subunit"/>
    <property type="match status" value="1"/>
</dbReference>
<dbReference type="HAMAP" id="MF_00059">
    <property type="entry name" value="RNApol_bact_RpoA"/>
    <property type="match status" value="1"/>
</dbReference>
<dbReference type="InterPro" id="IPR011262">
    <property type="entry name" value="DNA-dir_RNA_pol_insert"/>
</dbReference>
<dbReference type="InterPro" id="IPR011263">
    <property type="entry name" value="DNA-dir_RNA_pol_RpoA/D/Rpb3"/>
</dbReference>
<dbReference type="InterPro" id="IPR011773">
    <property type="entry name" value="DNA-dir_RpoA"/>
</dbReference>
<dbReference type="InterPro" id="IPR036603">
    <property type="entry name" value="RBP11-like"/>
</dbReference>
<dbReference type="InterPro" id="IPR011260">
    <property type="entry name" value="RNAP_asu_C"/>
</dbReference>
<dbReference type="InterPro" id="IPR036643">
    <property type="entry name" value="RNApol_insert_sf"/>
</dbReference>
<dbReference type="NCBIfam" id="NF003513">
    <property type="entry name" value="PRK05182.1-2"/>
    <property type="match status" value="1"/>
</dbReference>
<dbReference type="NCBIfam" id="NF003519">
    <property type="entry name" value="PRK05182.2-5"/>
    <property type="match status" value="1"/>
</dbReference>
<dbReference type="NCBIfam" id="TIGR02027">
    <property type="entry name" value="rpoA"/>
    <property type="match status" value="1"/>
</dbReference>
<dbReference type="Pfam" id="PF01000">
    <property type="entry name" value="RNA_pol_A_bac"/>
    <property type="match status" value="1"/>
</dbReference>
<dbReference type="Pfam" id="PF03118">
    <property type="entry name" value="RNA_pol_A_CTD"/>
    <property type="match status" value="1"/>
</dbReference>
<dbReference type="Pfam" id="PF01193">
    <property type="entry name" value="RNA_pol_L"/>
    <property type="match status" value="1"/>
</dbReference>
<dbReference type="SMART" id="SM00662">
    <property type="entry name" value="RPOLD"/>
    <property type="match status" value="1"/>
</dbReference>
<dbReference type="SUPFAM" id="SSF47789">
    <property type="entry name" value="C-terminal domain of RNA polymerase alpha subunit"/>
    <property type="match status" value="1"/>
</dbReference>
<dbReference type="SUPFAM" id="SSF56553">
    <property type="entry name" value="Insert subdomain of RNA polymerase alpha subunit"/>
    <property type="match status" value="1"/>
</dbReference>
<dbReference type="SUPFAM" id="SSF55257">
    <property type="entry name" value="RBP11-like subunits of RNA polymerase"/>
    <property type="match status" value="1"/>
</dbReference>
<sequence length="347" mass="38922">MLIKQGDRLINTRNWSELVKPEQISRDGEVSDTMYGKFVCEPLERGYATTIGNAMRRVLLSSLQGAAFVAVKISGVQHEFTTIPGVLEDVTDVVLNLKQVRLAMDTEEPQYLELKVDKRGAITAGDVRTNQHVMVLNPDQHIATLTEDIELTFELEVRMGKGYVPADMHEGLSEEIGLIKLDASFSPVRKVAYTVEQARVGQMTNYDKLILEVWTDGSVSPEDAIAYSAKIIKDQISVFINFDERISGENSNGSADSGEFNEHLFKSIDELELSVRATNCLKSANIALVGELVQKSENEMLKTKNFGRKSLDEIRRVLGDMGLDFGTKVDGFEKKYQEWKRKQQHEA</sequence>